<keyword id="KW-0002">3D-structure</keyword>
<keyword id="KW-0007">Acetylation</keyword>
<keyword id="KW-0013">ADP-ribosylation</keyword>
<keyword id="KW-0158">Chromosome</keyword>
<keyword id="KW-0164">Citrullination</keyword>
<keyword id="KW-0238">DNA-binding</keyword>
<keyword id="KW-0379">Hydroxylation</keyword>
<keyword id="KW-0449">Lipoprotein</keyword>
<keyword id="KW-0488">Methylation</keyword>
<keyword id="KW-0544">Nucleosome core</keyword>
<keyword id="KW-0539">Nucleus</keyword>
<keyword id="KW-0597">Phosphoprotein</keyword>
<keyword id="KW-1185">Reference proteome</keyword>
<keyword id="KW-0832">Ubl conjugation</keyword>
<evidence type="ECO:0000250" key="1">
    <source>
        <dbReference type="UniProtKB" id="P68431"/>
    </source>
</evidence>
<evidence type="ECO:0000250" key="2">
    <source>
        <dbReference type="UniProtKB" id="P84243"/>
    </source>
</evidence>
<evidence type="ECO:0000250" key="3">
    <source>
        <dbReference type="UniProtKB" id="P84245"/>
    </source>
</evidence>
<evidence type="ECO:0000250" key="4">
    <source>
        <dbReference type="UniProtKB" id="Q71DI3"/>
    </source>
</evidence>
<evidence type="ECO:0000256" key="5">
    <source>
        <dbReference type="SAM" id="MobiDB-lite"/>
    </source>
</evidence>
<evidence type="ECO:0000269" key="6">
    <source>
    </source>
</evidence>
<evidence type="ECO:0000269" key="7">
    <source>
    </source>
</evidence>
<evidence type="ECO:0000269" key="8">
    <source>
    </source>
</evidence>
<evidence type="ECO:0000269" key="9">
    <source>
    </source>
</evidence>
<evidence type="ECO:0000269" key="10">
    <source>
    </source>
</evidence>
<evidence type="ECO:0000269" key="11">
    <source>
    </source>
</evidence>
<evidence type="ECO:0000269" key="12">
    <source>
    </source>
</evidence>
<evidence type="ECO:0000269" key="13">
    <source>
    </source>
</evidence>
<evidence type="ECO:0000269" key="14">
    <source>
    </source>
</evidence>
<evidence type="ECO:0000269" key="15">
    <source>
    </source>
</evidence>
<evidence type="ECO:0000269" key="16">
    <source>
    </source>
</evidence>
<evidence type="ECO:0000269" key="17">
    <source>
    </source>
</evidence>
<evidence type="ECO:0000269" key="18">
    <source>
    </source>
</evidence>
<evidence type="ECO:0000269" key="19">
    <source>
    </source>
</evidence>
<evidence type="ECO:0000269" key="20">
    <source>
    </source>
</evidence>
<evidence type="ECO:0000269" key="21">
    <source>
    </source>
</evidence>
<evidence type="ECO:0000269" key="22">
    <source>
    </source>
</evidence>
<evidence type="ECO:0000269" key="23">
    <source>
    </source>
</evidence>
<evidence type="ECO:0000269" key="24">
    <source>
    </source>
</evidence>
<evidence type="ECO:0000269" key="25">
    <source>
    </source>
</evidence>
<evidence type="ECO:0000269" key="26">
    <source>
    </source>
</evidence>
<evidence type="ECO:0000269" key="27">
    <source>
    </source>
</evidence>
<evidence type="ECO:0000269" key="28">
    <source>
    </source>
</evidence>
<evidence type="ECO:0000269" key="29">
    <source>
    </source>
</evidence>
<evidence type="ECO:0000305" key="30"/>
<evidence type="ECO:0000305" key="31">
    <source>
    </source>
</evidence>
<evidence type="ECO:0000305" key="32">
    <source>
    </source>
</evidence>
<evidence type="ECO:0000312" key="33">
    <source>
        <dbReference type="MGI" id="MGI:1097686"/>
    </source>
</evidence>
<evidence type="ECO:0000312" key="34">
    <source>
        <dbReference type="MGI" id="MGI:1101768"/>
    </source>
</evidence>
<evidence type="ECO:0007829" key="35">
    <source>
        <dbReference type="PDB" id="8PKI"/>
    </source>
</evidence>
<evidence type="ECO:0007829" key="36">
    <source>
        <dbReference type="PDB" id="8PKJ"/>
    </source>
</evidence>
<reference key="1">
    <citation type="journal article" date="1989" name="Nucleic Acids Res.">
        <title>Expression of a mouse replacement histone H3.3 gene with a highly conserved 3' noncoding region during SV40- and polyoma-induced Go to S-phase transition.</title>
        <authorList>
            <person name="Hraba-Renevey S."/>
            <person name="Kress M."/>
        </authorList>
    </citation>
    <scope>NUCLEOTIDE SEQUENCE [MRNA] (H3-3A)</scope>
</reference>
<reference key="2">
    <citation type="journal article" date="1997" name="Differentiation">
        <title>Differential expression of the murine histone genes H3.3A and H3.3B.</title>
        <authorList>
            <person name="Bramlage B."/>
            <person name="Kosciessa U."/>
            <person name="Doenecke D."/>
        </authorList>
    </citation>
    <scope>NUCLEOTIDE SEQUENCE [MRNA] (H3-3A AND H3-3B)</scope>
    <scope>DEVELOPMENTAL STAGE</scope>
    <source>
        <tissue>Spermatid</tissue>
    </source>
</reference>
<reference key="3">
    <citation type="journal article" date="1997" name="DNA Cell Biol.">
        <title>H3.3A variant histone mRNA containing an alpha-globin insertion: modulated expression during mouse gametogenesis correlates with meiotic onset.</title>
        <authorList>
            <person name="Lopez-Alanon D.M."/>
            <person name="Lopez-Fernandez L.A."/>
            <person name="Castaneda V."/>
            <person name="Krimer D.B."/>
            <person name="Del Mazo J."/>
        </authorList>
    </citation>
    <scope>NUCLEOTIDE SEQUENCE [MRNA] (H3-3A)</scope>
    <source>
        <strain>SWR/J</strain>
        <tissue>Ovary</tissue>
    </source>
</reference>
<reference key="4">
    <citation type="journal article" date="2005" name="Science">
        <title>The transcriptional landscape of the mammalian genome.</title>
        <authorList>
            <person name="Carninci P."/>
            <person name="Kasukawa T."/>
            <person name="Katayama S."/>
            <person name="Gough J."/>
            <person name="Frith M.C."/>
            <person name="Maeda N."/>
            <person name="Oyama R."/>
            <person name="Ravasi T."/>
            <person name="Lenhard B."/>
            <person name="Wells C."/>
            <person name="Kodzius R."/>
            <person name="Shimokawa K."/>
            <person name="Bajic V.B."/>
            <person name="Brenner S.E."/>
            <person name="Batalov S."/>
            <person name="Forrest A.R."/>
            <person name="Zavolan M."/>
            <person name="Davis M.J."/>
            <person name="Wilming L.G."/>
            <person name="Aidinis V."/>
            <person name="Allen J.E."/>
            <person name="Ambesi-Impiombato A."/>
            <person name="Apweiler R."/>
            <person name="Aturaliya R.N."/>
            <person name="Bailey T.L."/>
            <person name="Bansal M."/>
            <person name="Baxter L."/>
            <person name="Beisel K.W."/>
            <person name="Bersano T."/>
            <person name="Bono H."/>
            <person name="Chalk A.M."/>
            <person name="Chiu K.P."/>
            <person name="Choudhary V."/>
            <person name="Christoffels A."/>
            <person name="Clutterbuck D.R."/>
            <person name="Crowe M.L."/>
            <person name="Dalla E."/>
            <person name="Dalrymple B.P."/>
            <person name="de Bono B."/>
            <person name="Della Gatta G."/>
            <person name="di Bernardo D."/>
            <person name="Down T."/>
            <person name="Engstrom P."/>
            <person name="Fagiolini M."/>
            <person name="Faulkner G."/>
            <person name="Fletcher C.F."/>
            <person name="Fukushima T."/>
            <person name="Furuno M."/>
            <person name="Futaki S."/>
            <person name="Gariboldi M."/>
            <person name="Georgii-Hemming P."/>
            <person name="Gingeras T.R."/>
            <person name="Gojobori T."/>
            <person name="Green R.E."/>
            <person name="Gustincich S."/>
            <person name="Harbers M."/>
            <person name="Hayashi Y."/>
            <person name="Hensch T.K."/>
            <person name="Hirokawa N."/>
            <person name="Hill D."/>
            <person name="Huminiecki L."/>
            <person name="Iacono M."/>
            <person name="Ikeo K."/>
            <person name="Iwama A."/>
            <person name="Ishikawa T."/>
            <person name="Jakt M."/>
            <person name="Kanapin A."/>
            <person name="Katoh M."/>
            <person name="Kawasawa Y."/>
            <person name="Kelso J."/>
            <person name="Kitamura H."/>
            <person name="Kitano H."/>
            <person name="Kollias G."/>
            <person name="Krishnan S.P."/>
            <person name="Kruger A."/>
            <person name="Kummerfeld S.K."/>
            <person name="Kurochkin I.V."/>
            <person name="Lareau L.F."/>
            <person name="Lazarevic D."/>
            <person name="Lipovich L."/>
            <person name="Liu J."/>
            <person name="Liuni S."/>
            <person name="McWilliam S."/>
            <person name="Madan Babu M."/>
            <person name="Madera M."/>
            <person name="Marchionni L."/>
            <person name="Matsuda H."/>
            <person name="Matsuzawa S."/>
            <person name="Miki H."/>
            <person name="Mignone F."/>
            <person name="Miyake S."/>
            <person name="Morris K."/>
            <person name="Mottagui-Tabar S."/>
            <person name="Mulder N."/>
            <person name="Nakano N."/>
            <person name="Nakauchi H."/>
            <person name="Ng P."/>
            <person name="Nilsson R."/>
            <person name="Nishiguchi S."/>
            <person name="Nishikawa S."/>
            <person name="Nori F."/>
            <person name="Ohara O."/>
            <person name="Okazaki Y."/>
            <person name="Orlando V."/>
            <person name="Pang K.C."/>
            <person name="Pavan W.J."/>
            <person name="Pavesi G."/>
            <person name="Pesole G."/>
            <person name="Petrovsky N."/>
            <person name="Piazza S."/>
            <person name="Reed J."/>
            <person name="Reid J.F."/>
            <person name="Ring B.Z."/>
            <person name="Ringwald M."/>
            <person name="Rost B."/>
            <person name="Ruan Y."/>
            <person name="Salzberg S.L."/>
            <person name="Sandelin A."/>
            <person name="Schneider C."/>
            <person name="Schoenbach C."/>
            <person name="Sekiguchi K."/>
            <person name="Semple C.A."/>
            <person name="Seno S."/>
            <person name="Sessa L."/>
            <person name="Sheng Y."/>
            <person name="Shibata Y."/>
            <person name="Shimada H."/>
            <person name="Shimada K."/>
            <person name="Silva D."/>
            <person name="Sinclair B."/>
            <person name="Sperling S."/>
            <person name="Stupka E."/>
            <person name="Sugiura K."/>
            <person name="Sultana R."/>
            <person name="Takenaka Y."/>
            <person name="Taki K."/>
            <person name="Tammoja K."/>
            <person name="Tan S.L."/>
            <person name="Tang S."/>
            <person name="Taylor M.S."/>
            <person name="Tegner J."/>
            <person name="Teichmann S.A."/>
            <person name="Ueda H.R."/>
            <person name="van Nimwegen E."/>
            <person name="Verardo R."/>
            <person name="Wei C.L."/>
            <person name="Yagi K."/>
            <person name="Yamanishi H."/>
            <person name="Zabarovsky E."/>
            <person name="Zhu S."/>
            <person name="Zimmer A."/>
            <person name="Hide W."/>
            <person name="Bult C."/>
            <person name="Grimmond S.M."/>
            <person name="Teasdale R.D."/>
            <person name="Liu E.T."/>
            <person name="Brusic V."/>
            <person name="Quackenbush J."/>
            <person name="Wahlestedt C."/>
            <person name="Mattick J.S."/>
            <person name="Hume D.A."/>
            <person name="Kai C."/>
            <person name="Sasaki D."/>
            <person name="Tomaru Y."/>
            <person name="Fukuda S."/>
            <person name="Kanamori-Katayama M."/>
            <person name="Suzuki M."/>
            <person name="Aoki J."/>
            <person name="Arakawa T."/>
            <person name="Iida J."/>
            <person name="Imamura K."/>
            <person name="Itoh M."/>
            <person name="Kato T."/>
            <person name="Kawaji H."/>
            <person name="Kawagashira N."/>
            <person name="Kawashima T."/>
            <person name="Kojima M."/>
            <person name="Kondo S."/>
            <person name="Konno H."/>
            <person name="Nakano K."/>
            <person name="Ninomiya N."/>
            <person name="Nishio T."/>
            <person name="Okada M."/>
            <person name="Plessy C."/>
            <person name="Shibata K."/>
            <person name="Shiraki T."/>
            <person name="Suzuki S."/>
            <person name="Tagami M."/>
            <person name="Waki K."/>
            <person name="Watahiki A."/>
            <person name="Okamura-Oho Y."/>
            <person name="Suzuki H."/>
            <person name="Kawai J."/>
            <person name="Hayashizaki Y."/>
        </authorList>
    </citation>
    <scope>NUCLEOTIDE SEQUENCE [LARGE SCALE MRNA] (H3-3A AND H3-3B)</scope>
    <source>
        <strain>BALB/cJ</strain>
        <strain>C57BL/6J</strain>
        <strain>DBA/2J</strain>
        <strain>NOD</strain>
        <tissue>Bone marrow</tissue>
        <tissue>Egg</tissue>
        <tissue>Head</tissue>
        <tissue>Kidney</tissue>
        <tissue>Muellerian duct</tissue>
        <tissue>Stomach</tissue>
        <tissue>Thymus</tissue>
    </source>
</reference>
<reference key="5">
    <citation type="journal article" date="2004" name="Genome Res.">
        <title>The status, quality, and expansion of the NIH full-length cDNA project: the Mammalian Gene Collection (MGC).</title>
        <authorList>
            <consortium name="The MGC Project Team"/>
        </authorList>
    </citation>
    <scope>NUCLEOTIDE SEQUENCE [LARGE SCALE MRNA] (H3-3A AND H3-3B)</scope>
    <source>
        <strain>C57BL/6J</strain>
        <strain>FVB/N</strain>
        <tissue>Brain</tissue>
        <tissue>Colon</tissue>
        <tissue>Mammary tumor</tissue>
        <tissue>Retina</tissue>
    </source>
</reference>
<reference key="6">
    <citation type="journal article" date="2004" name="J. Mol. Evol.">
        <title>A new family of 'H3L-like' histone genes.</title>
        <authorList>
            <person name="Mancini P."/>
            <person name="Pulcrano G."/>
            <person name="Piscopo M."/>
            <person name="Aniello F."/>
            <person name="Branno M."/>
            <person name="Fucci L."/>
        </authorList>
    </citation>
    <scope>NUCLEOTIDE SEQUENCE [GENOMIC DNA] OF 16-122</scope>
</reference>
<reference key="7">
    <citation type="journal article" date="1999" name="J. Biol. Chem.">
        <title>Identification of a novel phosphorylation site on histone H3 coupled with mitotic chromosome condensation.</title>
        <authorList>
            <person name="Goto H."/>
            <person name="Tomono Y."/>
            <person name="Ajiro K."/>
            <person name="Kosako H."/>
            <person name="Fujita M."/>
            <person name="Sakurai M."/>
            <person name="Okawa K."/>
            <person name="Iwamatsu A."/>
            <person name="Okigaki T."/>
            <person name="Takahashi T."/>
            <person name="Inagaki M."/>
        </authorList>
    </citation>
    <scope>PHOSPHORYLATION AT SER-11 AND SER-29</scope>
</reference>
<reference key="8">
    <citation type="journal article" date="2001" name="J. Biol. Chem.">
        <title>Ultraviolet B-induced phosphorylation of histone H3 at serine 28 is mediated by MSK1.</title>
        <authorList>
            <person name="Zhong S."/>
            <person name="Jansen C."/>
            <person name="She Q.-B."/>
            <person name="Goto H."/>
            <person name="Inagaki M."/>
            <person name="Bode A.M."/>
            <person name="Ma W.-Y."/>
            <person name="Dong Z."/>
        </authorList>
    </citation>
    <scope>PHOSPHORYLATION AT SER-29</scope>
</reference>
<reference key="9">
    <citation type="journal article" date="2002" name="Curr. Biol.">
        <title>Crosstalk between CARM1 methylation and CBP acetylation on histone H3.</title>
        <authorList>
            <person name="Daujat S."/>
            <person name="Bauer U.-M."/>
            <person name="Shah V."/>
            <person name="Turner B."/>
            <person name="Berger S."/>
            <person name="Kouzarides T."/>
        </authorList>
    </citation>
    <scope>ACETYLATION AT LYS-15; LYS-19 AND LYS-24</scope>
    <scope>METHYLATION AT ARG-18</scope>
</reference>
<reference key="10">
    <citation type="journal article" date="2002" name="EMBO Rep.">
        <title>Methylation at arginine 17 of histone H3 is linked to gene activation.</title>
        <authorList>
            <person name="Bauer U.-M."/>
            <person name="Daujat S."/>
            <person name="Nielsen S.J."/>
            <person name="Nightingale K."/>
            <person name="Kouzarides T."/>
        </authorList>
    </citation>
    <scope>METHYLATION AT ARG-18</scope>
</reference>
<reference key="11">
    <citation type="journal article" date="2002" name="Genes Cells">
        <title>Aurora-B phosphorylates Histone H3 at serine28 with regard to the mitotic chromosome condensation.</title>
        <authorList>
            <person name="Goto H."/>
            <person name="Yasui Y."/>
            <person name="Nigg E.A."/>
            <person name="Inagaki M."/>
        </authorList>
    </citation>
    <scope>PHOSPHORYLATION AT SER-11 AND SER-29</scope>
</reference>
<reference key="12">
    <citation type="journal article" date="2003" name="J. Protein Chem.">
        <title>Identification of methylation and acetylation sites on mouse histone H3 using matrix-assisted laser desorption/ionization time-of-flight and nanoelectrospray ionization tandem mass spectrometry.</title>
        <authorList>
            <person name="Cocklin R.R."/>
            <person name="Wang M."/>
        </authorList>
    </citation>
    <scope>ACETYLATION AT LYS-15; LYS-19 AND LYS-24</scope>
    <scope>METHYLATION AT LYS-10; LYS-28; LYS-37; LYS-80 AND LYS-123</scope>
    <scope>IDENTIFICATION BY MASS SPECTROMETRY</scope>
</reference>
<reference key="13">
    <citation type="journal article" date="2004" name="Cell">
        <title>Histone deimination antagonizes arginine methylation.</title>
        <authorList>
            <person name="Cuthbert G.L."/>
            <person name="Daujat S."/>
            <person name="Snowden A.W."/>
            <person name="Erdjument-Bromage H."/>
            <person name="Hagiwara T."/>
            <person name="Yamada M."/>
            <person name="Schneider R."/>
            <person name="Gregory P.D."/>
            <person name="Tempst P."/>
            <person name="Bannister A.J."/>
            <person name="Kouzarides T."/>
        </authorList>
    </citation>
    <scope>CITRULLINATION AT ARG-3; ARG-9; ARG-18 AND ARG-27</scope>
</reference>
<reference key="14">
    <citation type="journal article" date="2004" name="Mol. Cell. Biol.">
        <title>Human SWI/SNF-associated PRMT5 methylates histone H3 arginine 8 and negatively regulates expression of ST7 and NM23 tumor suppressor genes.</title>
        <authorList>
            <person name="Pal S."/>
            <person name="Vishwanath S.N."/>
            <person name="Erdjument-Bromage H."/>
            <person name="Tempst P."/>
            <person name="Sif S."/>
        </authorList>
    </citation>
    <scope>METHYLATION AT ARG-9</scope>
    <scope>ACETYLATION AT LYS-10</scope>
</reference>
<reference key="15">
    <citation type="journal article" date="2005" name="EMBO J.">
        <title>Arginine methyltransferase CARM1 is a promoter-specific regulator of NF-kappaB-dependent gene expression.</title>
        <authorList>
            <person name="Covic M."/>
            <person name="Hassa P.O."/>
            <person name="Saccani S."/>
            <person name="Buerki C."/>
            <person name="Meier N.I."/>
            <person name="Lombardi C."/>
            <person name="Imhof R."/>
            <person name="Bedford M.T."/>
            <person name="Natoli G."/>
            <person name="Hottiger M.O."/>
        </authorList>
    </citation>
    <scope>METHYLATION AT ARG-18</scope>
</reference>
<reference key="16">
    <citation type="journal article" date="2005" name="Genes Dev.">
        <title>The kinase haspin is required for mitotic histone H3 Thr 3 phosphorylation and normal metaphase chromosome alignment.</title>
        <authorList>
            <person name="Dai J."/>
            <person name="Sultan S."/>
            <person name="Taylor S.S."/>
            <person name="Higgins J.M.G."/>
        </authorList>
    </citation>
    <scope>PHOSPHORYLATION AT THR-4 AND SER-11</scope>
</reference>
<reference key="17">
    <citation type="journal article" date="2005" name="J. Biol. Chem.">
        <title>Phosphorylation of Ser28 in histone H3 mediated by mixed lineage kinase-like mitogen-activated protein triple kinase alpha.</title>
        <authorList>
            <person name="Choi H.S."/>
            <person name="Choi B.Y."/>
            <person name="Cho Y.-Y."/>
            <person name="Zhu F."/>
            <person name="Bode A.M."/>
            <person name="Dong Z."/>
        </authorList>
    </citation>
    <scope>PHOSPHORYLATION AT SER-29</scope>
</reference>
<reference key="18">
    <citation type="journal article" date="2005" name="J. Cell Sci.">
        <title>MAP kinase-mediated phosphorylation of distinct pools of histone H3 at S10 or S28 via mitogen- and stress-activated kinase 1/2.</title>
        <authorList>
            <person name="Dyson M.H."/>
            <person name="Thomson S."/>
            <person name="Inagaki M."/>
            <person name="Goto H."/>
            <person name="Arthur S.J."/>
            <person name="Nightingale K."/>
            <person name="Iborra F.J."/>
            <person name="Mahadevan L.C."/>
        </authorList>
    </citation>
    <scope>PHOSPHORYLATION AT SER-11 AND SER-29</scope>
</reference>
<reference key="19">
    <citation type="journal article" date="2005" name="Oncogene">
        <title>Stimulation of the Ras-MAPK pathway leads to independent phosphorylation of histone H3 on serine 10 and 28.</title>
        <authorList>
            <person name="Dunn K.L."/>
            <person name="Davie J.R."/>
        </authorList>
    </citation>
    <scope>PHOSPHORYLATION AT SER-11 AND SER-29</scope>
</reference>
<reference key="20">
    <citation type="journal article" date="2007" name="J. Biol. Chem.">
        <title>Organismal differences in post-translational modifications in histones H3 and H4.</title>
        <authorList>
            <person name="Garcia B.A."/>
            <person name="Hake S.B."/>
            <person name="Diaz R.L."/>
            <person name="Kauer M."/>
            <person name="Morris S.A."/>
            <person name="Recht J."/>
            <person name="Shabanowitz J."/>
            <person name="Mishra N."/>
            <person name="Strahl B.D."/>
            <person name="Allis C.D."/>
            <person name="Hunt D.F."/>
        </authorList>
    </citation>
    <scope>ACETYLATION AT LYS-5; LYS-10; LYS-15; LYS-19; LYS-24 AND LYS-28</scope>
    <scope>METHYLATION AT LYS-5; LYS-10; LYS-19; LYS-24; LYS-28; LYS-37 AND LYS-80</scope>
    <scope>IDENTIFICATION BY MASS SPECTROMETRY</scope>
</reference>
<reference key="21">
    <citation type="journal article" date="2007" name="J. Biol. Chem.">
        <title>Identification of histone H3 lysine 36 acetylation as a highly conserved histone modification.</title>
        <authorList>
            <person name="Morris S.A."/>
            <person name="Rao B."/>
            <person name="Garcia B.A."/>
            <person name="Hake S.B."/>
            <person name="Diaz R.L."/>
            <person name="Shabanowitz J."/>
            <person name="Hunt D.F."/>
            <person name="Allis C.D."/>
            <person name="Lieb J.D."/>
            <person name="Strahl B.D."/>
        </authorList>
    </citation>
    <scope>ACETYLATION AT LYS-37</scope>
</reference>
<reference key="22">
    <citation type="journal article" date="2010" name="Mol. Cell">
        <title>The RING domain of RAG1 ubiquitylates histone H3: a novel activity in chromatin-mediated regulation of V(D)J joining.</title>
        <authorList>
            <person name="Grazini U."/>
            <person name="Zanardi F."/>
            <person name="Citterio E."/>
            <person name="Casola S."/>
            <person name="Goding C.R."/>
            <person name="McBlane F."/>
        </authorList>
    </citation>
    <scope>UBIQUITINATION</scope>
</reference>
<reference key="23">
    <citation type="journal article" date="2011" name="Cell">
        <title>Identification of 67 histone marks and histone lysine crotonylation as a new type of histone modification.</title>
        <authorList>
            <person name="Tan M."/>
            <person name="Luo H."/>
            <person name="Lee S."/>
            <person name="Jin F."/>
            <person name="Yang J.S."/>
            <person name="Montellier E."/>
            <person name="Buchou T."/>
            <person name="Cheng Z."/>
            <person name="Rousseaux S."/>
            <person name="Rajagopal N."/>
            <person name="Lu Z."/>
            <person name="Ye Z."/>
            <person name="Zhu Q."/>
            <person name="Wysocka J."/>
            <person name="Ye Y."/>
            <person name="Khochbin S."/>
            <person name="Ren B."/>
            <person name="Zhao Y."/>
        </authorList>
    </citation>
    <scope>CROTONYLATION AT LYS-5; LYS-10; LYS-19; LYS-24; LYS-28 AND LYS-57</scope>
</reference>
<reference key="24">
    <citation type="journal article" date="2012" name="Mol. Cell. Proteomics">
        <title>Lysine succinylation and lysine malonylation in histones.</title>
        <authorList>
            <person name="Xie Z."/>
            <person name="Dai J."/>
            <person name="Dai L."/>
            <person name="Tan M."/>
            <person name="Cheng Z."/>
            <person name="Wu Y."/>
            <person name="Boeke J.D."/>
            <person name="Zhao Y."/>
        </authorList>
    </citation>
    <scope>SUCCINYLATION AT LYS-57 AND LYS-80</scope>
</reference>
<reference key="25">
    <citation type="journal article" date="2014" name="Nat. Chem. Biol.">
        <title>Lysine 2-hydroxyisobutyrylation is a widely distributed active histone mark.</title>
        <authorList>
            <person name="Dai L."/>
            <person name="Peng C."/>
            <person name="Montellier E."/>
            <person name="Lu Z."/>
            <person name="Chen Y."/>
            <person name="Ishii H."/>
            <person name="Debernardi A."/>
            <person name="Buchou T."/>
            <person name="Rousseaux S."/>
            <person name="Jin F."/>
            <person name="Sabari B.R."/>
            <person name="Deng Z."/>
            <person name="Allis C.D."/>
            <person name="Ren B."/>
            <person name="Khochbin S."/>
            <person name="Zhao Y."/>
        </authorList>
    </citation>
    <scope>HYDROXYBUTYRYLATION AT LYS-5; LYS-10; LYS-15; LYS-19; LYS-24; LYS-28; LYS-37; LYS-57; LYS-65; LYS-80 AND LYS-123</scope>
</reference>
<reference key="26">
    <citation type="journal article" date="2016" name="Mol. Cell">
        <title>Dynamic competing histone H4 K5K8 acetylation and butyrylation are hallmarks of highly active gene promoters.</title>
        <authorList>
            <person name="Goudarzi A."/>
            <person name="Zhang D."/>
            <person name="Huang H."/>
            <person name="Barral S."/>
            <person name="Kwon O.K."/>
            <person name="Qi S."/>
            <person name="Tang Z."/>
            <person name="Buchou T."/>
            <person name="Vitte A.L."/>
            <person name="He T."/>
            <person name="Cheng Z."/>
            <person name="Montellier E."/>
            <person name="Gaucher J."/>
            <person name="Curtet S."/>
            <person name="Debernardi A."/>
            <person name="Charbonnier G."/>
            <person name="Puthier D."/>
            <person name="Petosa C."/>
            <person name="Panne D."/>
            <person name="Rousseaux S."/>
            <person name="Roeder R.G."/>
            <person name="Zhao Y."/>
            <person name="Khochbin S."/>
        </authorList>
    </citation>
    <scope>BUTYRYLATION AT LYS-19; LYS-24; LYS-28; LYS-37; LYS-38; LYS-80 AND LYS-123</scope>
</reference>
<reference key="27">
    <citation type="journal article" date="2016" name="Mol. Cell">
        <title>Metabolic regulation of gene expression by histone lysine beta-hydroxybutyrylation.</title>
        <authorList>
            <person name="Xie Z."/>
            <person name="Zhang D."/>
            <person name="Chung D."/>
            <person name="Tang Z."/>
            <person name="Huang H."/>
            <person name="Dai L."/>
            <person name="Qi S."/>
            <person name="Li J."/>
            <person name="Colak G."/>
            <person name="Chen Y."/>
            <person name="Xia C."/>
            <person name="Peng C."/>
            <person name="Ruan H."/>
            <person name="Kirkey M."/>
            <person name="Wang D."/>
            <person name="Jensen L.M."/>
            <person name="Kwon O.K."/>
            <person name="Lee S."/>
            <person name="Pletcher S.D."/>
            <person name="Tan M."/>
            <person name="Lombard D.B."/>
            <person name="White K.P."/>
            <person name="Zhao H."/>
            <person name="Li J."/>
            <person name="Roeder R.G."/>
            <person name="Yang X."/>
            <person name="Zhao Y."/>
        </authorList>
    </citation>
    <scope>HYDROXYBUTYRYLATION AT LYS-5; LYS-10; LYS-15; LYS-19; LYS-24 AND LYS-57</scope>
</reference>
<reference key="28">
    <citation type="journal article" date="2018" name="Sci. Rep.">
        <title>Histone deacetylase (HDAC) 1 and 2 complexes regulate both histone acetylation and crotonylation in vivo.</title>
        <authorList>
            <person name="Kelly R.D.W."/>
            <person name="Chandru A."/>
            <person name="Watson P.J."/>
            <person name="Song Y."/>
            <person name="Blades M."/>
            <person name="Robertson N.S."/>
            <person name="Jamieson A.G."/>
            <person name="Schwabe J.W.R."/>
            <person name="Cowley S.M."/>
        </authorList>
    </citation>
    <scope>CROTONYLATION AT LYS-19</scope>
    <scope>ACETYLATION AT LYS-19</scope>
</reference>
<reference key="29">
    <citation type="journal article" date="2019" name="Nature">
        <title>Histone serotonylation is a permissive modification that enhances TFIID binding to H3K4me3.</title>
        <authorList>
            <person name="Farrelly L.A."/>
            <person name="Thompson R.E."/>
            <person name="Zhao S."/>
            <person name="Lepack A.E."/>
            <person name="Lyu Y."/>
            <person name="Bhanu N.V."/>
            <person name="Zhang B."/>
            <person name="Loh Y.E."/>
            <person name="Ramakrishnan A."/>
            <person name="Vadodaria K.C."/>
            <person name="Heard K.J."/>
            <person name="Erikson G."/>
            <person name="Nakadai T."/>
            <person name="Bastle R.M."/>
            <person name="Lukasak B.J."/>
            <person name="Zebroski H. III"/>
            <person name="Alenina N."/>
            <person name="Bader M."/>
            <person name="Berton O."/>
            <person name="Roeder R.G."/>
            <person name="Molina H."/>
            <person name="Gage F.H."/>
            <person name="Shen L."/>
            <person name="Garcia B.A."/>
            <person name="Li H."/>
            <person name="Muir T.W."/>
            <person name="Maze I."/>
        </authorList>
    </citation>
    <scope>SEROTONYLATION AT GLN-6</scope>
    <scope>MUTAGENESIS OF GLN-6</scope>
</reference>
<reference key="30">
    <citation type="journal article" date="2019" name="Nature">
        <title>Metabolic regulation of gene expression by histone lactylation.</title>
        <authorList>
            <person name="Zhang D."/>
            <person name="Tang Z."/>
            <person name="Huang H."/>
            <person name="Zhou G."/>
            <person name="Cui C."/>
            <person name="Weng Y."/>
            <person name="Liu W."/>
            <person name="Kim S."/>
            <person name="Lee S."/>
            <person name="Perez-Neut M."/>
            <person name="Ding J."/>
            <person name="Czyz D."/>
            <person name="Hu R."/>
            <person name="Ye Z."/>
            <person name="He M."/>
            <person name="Zheng Y.G."/>
            <person name="Shuman H.A."/>
            <person name="Dai L."/>
            <person name="Ren B."/>
            <person name="Roeder R.G."/>
            <person name="Becker L."/>
            <person name="Zhao Y."/>
        </authorList>
    </citation>
    <scope>LACTYLATION AT LYS-15; LYS-19; LYS-24; LYS-28 AND LYS-57</scope>
</reference>
<gene>
    <name evidence="2" type="primary">H3-3a</name>
    <name type="synonym">H3.3a</name>
    <name evidence="33" type="synonym">H3f3a</name>
</gene>
<gene>
    <name evidence="2" type="primary">H3-3b</name>
    <name type="synonym">H3.3b</name>
    <name evidence="34" type="synonym">H3f3b</name>
</gene>
<sequence length="136" mass="15328">MARTKQTARKSTGGKAPRKQLATKAARKSAPSTGGVKKPHRYRPGTVALREIRRYQKSTELLIRKLPFQRLVREIAQDFKTDLRFQSAAIGALQEASEAYLVGLFEDTNLCAIHAKRVTIMPKDIQLARRIRGERA</sequence>
<comment type="function">
    <text evidence="2">Variant histone H3 which replaces conventional H3 in a wide range of nucleosomes in active genes. Constitutes the predominant form of histone H3 in non-dividing cells and is incorporated into chromatin independently of DNA synthesis. Deposited at sites of nucleosomal displacement throughout transcribed genes, suggesting that it represents an epigenetic imprint of transcriptionally active chromatin. Nucleosomes wrap and compact DNA into chromatin, limiting DNA accessibility to the cellular machineries which require DNA as a template. Histones thereby play a central role in transcription regulation, DNA repair, DNA replication and chromosomal stability. DNA accessibility is regulated via a complex set of post-translational modifications of histones, also called histone code, and nucleosome remodeling.</text>
</comment>
<comment type="subunit">
    <text evidence="2">The nucleosome is a histone octamer containing two molecules each of H2A, H2B, H3 and H4 assembled in one H3-H4 heterotetramer and two H2A-H2B heterodimers. The octamer wraps approximately 147 bp of DNA. Interacts with HIRA, a chaperone required for its incorporation into nucleosomes. Interacts with ZMYND11; when trimethylated at 'Lys-36' (H3.3K36me3). Found in a co-chaperone complex with DNJC9, MCM2 and histone H3.3-H4 dimers (By similarity). Within the complex, interacts with DNJC9 (via C-terminus); the interaction is direct (By similarity). Interacts with ASF1A, MCM2, NASP and SPT2 (By similarity). Interacts with DAXX; the interaction is direct (By similarity). Interacts with NASP; NASP is a histone chaperone that stabilizes and maintains a soluble pool of Histone H3-H4 dimers (By similarity).</text>
</comment>
<comment type="subcellular location">
    <subcellularLocation>
        <location>Nucleus</location>
    </subcellularLocation>
    <subcellularLocation>
        <location>Chromosome</location>
    </subcellularLocation>
</comment>
<comment type="developmental stage">
    <text evidence="29">Expressed throughout the cell cycle independently of DNA synthesis.</text>
</comment>
<comment type="domain">
    <text evidence="2">Specific interaction of trimethylated form at 'Lys-36' (H3.3K36me3) with ZMYND11 is mediated by the encapsulation of Ser-32 residue with a composite pocket formed by the tandem bromo-PWWP domains (By similarity). Interacts with ZMYND11; when trimethylated at 'Lys-36' (H3.3K36me3).</text>
</comment>
<comment type="PTM">
    <text evidence="8 10 11 13 14 20">Acetylation is generally linked to gene activation. Acetylation on Lys-10 (H3K9ac) impairs methylation at Arg-9 (H3R8me2s). Acetylation on Lys-19 (H3K18ac) and Lys-24 (H3K24ac) favors methylation at Arg-18 (H3R17me). Acetylation at Lys-123 (H3K122ac) by EP300/p300 plays a central role in chromatin structure: localizes at the surface of the histone octamer and stimulates transcription, possibly by promoting nucleosome instability.</text>
</comment>
<comment type="PTM">
    <text evidence="8 10 12 13 14">Citrullination at Arg-9 (H3R8ci) and/or Arg-18 (H3R17ci) by PADI4 impairs methylation and represses transcription.</text>
</comment>
<comment type="PTM">
    <text evidence="2">Asymmetric dimethylation at Arg-18 (H3R17me2a) by CARM1 is linked to gene activation. Symmetric dimethylation at Arg-9 (H3R8me2s) by PRMT5 is linked to gene repression. Asymmetric dimethylation at Arg-3 (H3R2me2a) by PRMT6 is linked to gene repression and is mutually exclusive with H3 Lys-5 methylation (H3K4me2 and H3K4me3). H3R2me2a is present at the 3' of genes regardless of their transcription state and is enriched on inactive promoters, while it is absent on active promoters.</text>
</comment>
<comment type="PTM">
    <text evidence="6 9 11 13 15 17 18 19 20">Specifically enriched in modifications associated with active chromatin such as methylation at Lys-5 (H3K4me), Lys-37 and Lys-80. Methylation at Lys-5 (H3K4me) facilitates subsequent acetylation of H3 and H4. Methylation at Lys-80 (H3K79me) is associated with DNA double-strand break (DSB) responses and is a specific target for TP53BP1. Methylation at Lys-10 (H3K9me) and Lys-28 (H3K27me), which are linked to gene repression, are underrepresented. Methylation at Lys-10 (H3K9me) is a specific target for HP1 proteins (CBX1, CBX3 and CBX5) and prevents subsequent phosphorylation at Ser-11 (H3S10ph) and acetylation of H3 and H4. Methylation at Lys-5 (H3K4me) and Lys-80 (H3K79me) require preliminary monoubiquitination of H2B at 'Lys-120'. Methylation at Lys-10 (H3K9me) and Lys-28 (H3K27me) are enriched in inactive X chromosome chromatin. Monomethylation at Lys-57 (H3K56me1) by EHMT2/G9A in G1 phase promotes interaction with PCNA and is required for DNA replication.</text>
</comment>
<comment type="PTM">
    <text evidence="2 6 7 9 11 13 15 16 17 18 20">Phosphorylated at Thr-4 (H3T3ph) by VRK1 (By similarity). Phosphorylated at Thr-4 (H3T3ph) by HASPIN during prophase and dephosphorylated during anaphase. Phosphorylation at Ser-11 (H3S10ph) by AURKB is crucial for chromosome condensation and cell-cycle progression during mitosis and meiosis. In addition phosphorylation at Ser-11 (H3S10ph) by RPS6KA4 and RPS6KA5 is important during interphase because it enables the transcription of genes following external stimulation, like mitogens, stress, growth factors or UV irradiation and result in the activation of genes, such as c-fos and c-jun. Phosphorylation at Ser-11 (H3S10ph), which is linked to gene activation, prevents methylation at Lys-10 (H3K9me) but facilitates acetylation of H3 and H4. Phosphorylation at Ser-11 (H3S10ph) by AURKB mediates the dissociation of HP1 proteins (CBX1, CBX3 and CBX5) from heterochromatin. Phosphorylation at Ser-11 (H3S10ph) is also an essential regulatory mechanism for neoplastic cell transformation. Phosphorylated at Ser-29 (H3S28ph) by MAP3K20 isoform 1, RPS6KA5 or AURKB during mitosis or upon ultraviolet B irradiation. Phosphorylation at Thr-7 (H3T6ph) by PRKCB is a specific tag for epigenetic transcriptional activation that prevents demethylation of Lys-5 (H3K4me) by LSD1/KDM1A. At centromeres, specifically phosphorylated at Thr-12 (H3T11ph) from prophase to early anaphase, by DAPK3 and PKN1. Phosphorylation at Thr-12 (H3T11ph) by PKN1 or isoform M2 of PKM (PKM2) is a specific tag for epigenetic transcriptional activation that promotes demethylation of Lys-10 (H3K9me) by KDM4C/JMJD2C. Phosphorylation at Tyr-42 (H3Y41ph) by JAK2 promotes exclusion of CBX5 (HP1 alpha) from chromatin. Phosphorylation on Ser-32 (H3S31ph) is specific to regions bordering centromeres in metaphase chromosomes. metaphase chromosomes.</text>
</comment>
<comment type="PTM">
    <text evidence="32">Ubiquitinated. Monoubiquitinated by RAG1 in lymphoid cells, monoubiquitination is required for V(D)J recombination.</text>
</comment>
<comment type="PTM">
    <text evidence="2">Lysine deamination at Lys-5 (H3K4all) to form allysine is mediated by LOXL2. Allysine formation by LOXL2 only takes place on H3K4me3 and results in gene repression.</text>
</comment>
<comment type="PTM">
    <text evidence="21">Crotonylation (Kcr) is specifically present in male germ cells and marks testis-specific genes in post-meiotic cells, including X-linked genes that escape sex chromosome inactivation in haploid cells. Crotonylation marks active promoters and enhancers and confers resistance to transcriptional repressors. It is also associated with post-meiotically activated genes on autosomes.</text>
</comment>
<comment type="PTM">
    <text evidence="24">Butyrylation of histones marks active promoters and competes with histone acetylation. It is present during late spermatogenesis.</text>
</comment>
<comment type="PTM">
    <text evidence="25">Hydroxybutyrylation of histones is induced by starvation. It is linked to gene activation and may replace histone acetylation on the promoter of specific genes in response to fasting.</text>
</comment>
<comment type="PTM">
    <text evidence="2">Succinylation at Lys-80 (H3K79succ) by KAT2A takes place with a maximum frequency around the transcription start sites of genes. It gives a specific tag for epigenetic transcription activation. Desuccinylation at Lys-123 (H3K122succ) by SIRT7 in response to DNA damage promotes chromatin condensation and double-strand breaks (DSBs) repair.</text>
</comment>
<comment type="PTM">
    <text evidence="1">Serine ADP-ribosylation by PARP1 or PARP2 constitutes the primary form of ADP-ribosylation of proteins in response to DNA damage. Serine ADP-ribosylation at Ser-11 (H3S10ADPr) promotes recruitment of CHD1L. H3S10ADPr is mutually exclusive with phosphorylation at Ser-11 (H3S10ph) and impairs acetylation at Lys-10 (H3K9ac).</text>
</comment>
<comment type="PTM">
    <text evidence="27">Serotonylated by TGM2 at Gln-6 (H3Q5ser) during serotonergic neuron differentiation (PubMed:30867594). H3Q5ser is associated with trimethylation of Lys-5 (H3K4me3) and enhances general transcription factor IID (TFIID) complex-binding to H3K4me3, thereby facilitating transcription (PubMed:30867594).</text>
</comment>
<comment type="PTM">
    <text evidence="2 3">Dopaminylated by TGM2 at Gln-6 (H3Q5dop) in ventral tegmental area (VTA) neurons (By similarity). H3Q5dop mediates neurotransmission-independent role of nuclear dopamine by regulating relapse-related transcriptional plasticity in the reward system (By similarity).</text>
</comment>
<comment type="PTM">
    <text evidence="2">Lactylated in macrophages by EP300/P300 by using lactoyl-CoA directly derived from endogenous or exogenous lactate, leading to stimulates gene transcription.</text>
</comment>
<comment type="similarity">
    <text evidence="30">Belongs to the histone H3 family.</text>
</comment>
<comment type="sequence caution" evidence="30">
    <conflict type="frameshift">
        <sequence resource="EMBL-CDS" id="AAH92300"/>
    </conflict>
</comment>
<comment type="sequence caution" evidence="30">
    <conflict type="frameshift">
        <sequence resource="EMBL-CDS" id="BAB27616"/>
    </conflict>
</comment>
<comment type="sequence caution" evidence="30">
    <conflict type="frameshift">
        <sequence resource="EMBL-CDS" id="BAE35387"/>
    </conflict>
</comment>
<accession>P84244</accession>
<accession>P06351</accession>
<accession>P33155</accession>
<accession>Q3TW79</accession>
<accession>Q3U6D6</accession>
<accession>Q569U8</accession>
<accession>Q5HZY8</accession>
<accession>Q6TXQ5</accession>
<accession>Q8VDJ2</accession>
<accession>Q9D0H3</accession>
<accession>Q9V3W4</accession>
<feature type="initiator methionine" description="Removed" evidence="30">
    <location>
        <position position="1"/>
    </location>
</feature>
<feature type="chain" id="PRO_0000221251" description="Histone H3.3">
    <location>
        <begin position="2"/>
        <end position="136"/>
    </location>
</feature>
<feature type="region of interest" description="Disordered" evidence="5">
    <location>
        <begin position="1"/>
        <end position="43"/>
    </location>
</feature>
<feature type="site" description="Interaction with ZMYND11" evidence="2">
    <location>
        <position position="32"/>
    </location>
</feature>
<feature type="modified residue" description="Asymmetric dimethylarginine; by PRMT6; alternate" evidence="2">
    <location>
        <position position="3"/>
    </location>
</feature>
<feature type="modified residue" description="Citrulline; alternate" evidence="2">
    <location>
        <position position="3"/>
    </location>
</feature>
<feature type="modified residue" description="Phosphothreonine; by HASPIN and VRK1" evidence="2 15">
    <location>
        <position position="4"/>
    </location>
</feature>
<feature type="modified residue" description="Allysine; alternate" evidence="2">
    <location>
        <position position="5"/>
    </location>
</feature>
<feature type="modified residue" description="N6,N6,N6-trimethyllysine; alternate" evidence="20">
    <location>
        <position position="5"/>
    </location>
</feature>
<feature type="modified residue" description="N6,N6-dimethyllysine; alternate" evidence="20">
    <location>
        <position position="5"/>
    </location>
</feature>
<feature type="modified residue" description="N6-(2-hydroxyisobutyryl)lysine; alternate" evidence="23">
    <location>
        <position position="5"/>
    </location>
</feature>
<feature type="modified residue" description="N6-(beta-hydroxybutyryl)lysine; alternate" evidence="25">
    <location>
        <position position="5"/>
    </location>
</feature>
<feature type="modified residue" description="N6-acetyllysine; alternate" evidence="20">
    <location>
        <position position="5"/>
    </location>
</feature>
<feature type="modified residue" description="N6-crotonyllysine; alternate" evidence="21">
    <location>
        <position position="5"/>
    </location>
</feature>
<feature type="modified residue" description="N6-methyllysine; alternate" evidence="20">
    <location>
        <position position="5"/>
    </location>
</feature>
<feature type="modified residue" description="5-glutamyl dopamine; alternate" evidence="2">
    <location>
        <position position="6"/>
    </location>
</feature>
<feature type="modified residue" description="5-glutamyl serotonin; alternate" evidence="27">
    <location>
        <position position="6"/>
    </location>
</feature>
<feature type="modified residue" description="Phosphothreonine; by PKC" evidence="2">
    <location>
        <position position="7"/>
    </location>
</feature>
<feature type="modified residue" description="Citrulline; alternate" evidence="31">
    <location>
        <position position="9"/>
    </location>
</feature>
<feature type="modified residue" description="Symmetric dimethylarginine; by PRMT5; alternate" evidence="13">
    <location>
        <position position="9"/>
    </location>
</feature>
<feature type="modified residue" description="N6,N6,N6-trimethyllysine; alternate" evidence="11 20">
    <location>
        <position position="10"/>
    </location>
</feature>
<feature type="modified residue" description="N6,N6-dimethyllysine; alternate" evidence="11 20">
    <location>
        <position position="10"/>
    </location>
</feature>
<feature type="modified residue" description="N6-(2-hydroxyisobutyryl)lysine; alternate" evidence="23">
    <location>
        <position position="10"/>
    </location>
</feature>
<feature type="modified residue" description="N6-(beta-hydroxybutyryl)lysine; alternate" evidence="25">
    <location>
        <position position="10"/>
    </location>
</feature>
<feature type="modified residue" description="N6-acetyllysine; alternate" evidence="13 20">
    <location>
        <position position="10"/>
    </location>
</feature>
<feature type="modified residue" description="N6-crotonyllysine; alternate" evidence="21">
    <location>
        <position position="10"/>
    </location>
</feature>
<feature type="modified residue" description="N6-lactoyllysine; alternate" evidence="2">
    <location>
        <position position="10"/>
    </location>
</feature>
<feature type="modified residue" description="N6-methyllysine; alternate" evidence="11 20">
    <location>
        <position position="10"/>
    </location>
</feature>
<feature type="modified residue" description="ADP-ribosylserine; alternate" evidence="1">
    <location>
        <position position="11"/>
    </location>
</feature>
<feature type="modified residue" description="Phosphoserine; alternate; by AURKB, AURKC, RPS6KA3, RPS6KA4 and RPS6KA5" evidence="6 9 15 17 18">
    <location>
        <position position="11"/>
    </location>
</feature>
<feature type="modified residue" description="Phosphothreonine; by PKC" evidence="1">
    <location>
        <position position="12"/>
    </location>
</feature>
<feature type="modified residue" description="N6-(2-hydroxyisobutyryl)lysine; alternate" evidence="23">
    <location>
        <position position="15"/>
    </location>
</feature>
<feature type="modified residue" description="N6-(beta-hydroxybutyryl)lysine; alternate" evidence="25">
    <location>
        <position position="15"/>
    </location>
</feature>
<feature type="modified residue" description="N6-acetyllysine; alternate" evidence="10 11 20">
    <location>
        <position position="15"/>
    </location>
</feature>
<feature type="modified residue" description="N6-glutaryllysine; alternate" evidence="2">
    <location>
        <position position="15"/>
    </location>
</feature>
<feature type="modified residue" description="N6-lactoyllysine; alternate" evidence="28">
    <location>
        <position position="15"/>
    </location>
</feature>
<feature type="modified residue" description="N6-succinyllysine; alternate" evidence="2">
    <location>
        <position position="15"/>
    </location>
</feature>
<feature type="modified residue" description="Asymmetric dimethylarginine; by CARM1; alternate" evidence="8 10 14">
    <location>
        <position position="18"/>
    </location>
</feature>
<feature type="modified residue" description="Citrulline; alternate" evidence="12">
    <location>
        <position position="18"/>
    </location>
</feature>
<feature type="modified residue" description="N6-(2-hydroxyisobutyryl)lysine; alternate" evidence="23">
    <location>
        <position position="19"/>
    </location>
</feature>
<feature type="modified residue" description="N6-(beta-hydroxybutyryl)lysine; alternate" evidence="25">
    <location>
        <position position="19"/>
    </location>
</feature>
<feature type="modified residue" description="N6-acetyllysine; alternate" evidence="10 11 20 26">
    <location>
        <position position="19"/>
    </location>
</feature>
<feature type="modified residue" description="N6-butyryllysine; alternate" evidence="24">
    <location>
        <position position="19"/>
    </location>
</feature>
<feature type="modified residue" description="N6-crotonyllysine; alternate" evidence="21 26">
    <location>
        <position position="19"/>
    </location>
</feature>
<feature type="modified residue" description="N6-glutaryllysine; alternate" evidence="2">
    <location>
        <position position="19"/>
    </location>
</feature>
<feature type="modified residue" description="N6-lactoyllysine; alternate" evidence="28">
    <location>
        <position position="19"/>
    </location>
</feature>
<feature type="modified residue" description="N6-methyllysine; alternate" evidence="20">
    <location>
        <position position="19"/>
    </location>
</feature>
<feature type="modified residue" description="N6-(2-hydroxyisobutyryl)lysine; alternate" evidence="23">
    <location>
        <position position="24"/>
    </location>
</feature>
<feature type="modified residue" description="N6-(beta-hydroxybutyryl)lysine; alternate" evidence="25">
    <location>
        <position position="24"/>
    </location>
</feature>
<feature type="modified residue" description="N6-acetyllysine; alternate" evidence="10 11 20">
    <location>
        <position position="24"/>
    </location>
</feature>
<feature type="modified residue" description="N6-butyryllysine; alternate" evidence="24">
    <location>
        <position position="24"/>
    </location>
</feature>
<feature type="modified residue" description="N6-crotonyllysine; alternate" evidence="21">
    <location>
        <position position="24"/>
    </location>
</feature>
<feature type="modified residue" description="N6-glutaryllysine; alternate" evidence="2">
    <location>
        <position position="24"/>
    </location>
</feature>
<feature type="modified residue" description="N6-lactoyllysine; alternate" evidence="28">
    <location>
        <position position="24"/>
    </location>
</feature>
<feature type="modified residue" description="N6-methyllysine; alternate" evidence="20">
    <location>
        <position position="24"/>
    </location>
</feature>
<feature type="modified residue" description="Citrulline" evidence="2">
    <location>
        <position position="27"/>
    </location>
</feature>
<feature type="modified residue" description="N6,N6,N6-trimethyllysine; alternate" evidence="11 20">
    <location>
        <position position="28"/>
    </location>
</feature>
<feature type="modified residue" description="N6,N6-dimethyllysine; alternate" evidence="11 20">
    <location>
        <position position="28"/>
    </location>
</feature>
<feature type="modified residue" description="N6-(2-hydroxyisobutyryl)lysine; alternate" evidence="23">
    <location>
        <position position="28"/>
    </location>
</feature>
<feature type="modified residue" description="N6-acetyllysine; alternate" evidence="20">
    <location>
        <position position="28"/>
    </location>
</feature>
<feature type="modified residue" description="N6-butyryllysine; alternate" evidence="24">
    <location>
        <position position="28"/>
    </location>
</feature>
<feature type="modified residue" description="N6-crotonyllysine; alternate" evidence="21">
    <location>
        <position position="28"/>
    </location>
</feature>
<feature type="modified residue" description="N6-glutaryllysine; alternate" evidence="2">
    <location>
        <position position="28"/>
    </location>
</feature>
<feature type="modified residue" description="N6-lactoyllysine; alternate" evidence="28">
    <location>
        <position position="28"/>
    </location>
</feature>
<feature type="modified residue" description="N6-methyllysine; alternate" evidence="11 20">
    <location>
        <position position="28"/>
    </location>
</feature>
<feature type="modified residue" description="ADP-ribosylserine; alternate" evidence="1">
    <location>
        <position position="29"/>
    </location>
</feature>
<feature type="modified residue" description="Phosphoserine; alternate; by AURKB, AURKC and RPS6KA5" evidence="6 7 9 16 17 18">
    <location>
        <position position="29"/>
    </location>
</feature>
<feature type="modified residue" description="Phosphoserine" evidence="2">
    <location>
        <position position="32"/>
    </location>
</feature>
<feature type="modified residue" description="N6,N6,N6-trimethyllysine; alternate" evidence="2">
    <location>
        <position position="37"/>
    </location>
</feature>
<feature type="modified residue" description="N6,N6-dimethyllysine; alternate" evidence="11 20">
    <location>
        <position position="37"/>
    </location>
</feature>
<feature type="modified residue" description="N6-(2-hydroxyisobutyryl)lysine; alternate" evidence="23">
    <location>
        <position position="37"/>
    </location>
</feature>
<feature type="modified residue" description="N6-acetyllysine; alternate" evidence="19">
    <location>
        <position position="37"/>
    </location>
</feature>
<feature type="modified residue" description="N6-butyryllysine; alternate" evidence="24">
    <location>
        <position position="37"/>
    </location>
</feature>
<feature type="modified residue" description="N6-methyllysine; alternate" evidence="11 20">
    <location>
        <position position="37"/>
    </location>
</feature>
<feature type="modified residue" description="N6-butyryllysine; alternate" evidence="24">
    <location>
        <position position="38"/>
    </location>
</feature>
<feature type="modified residue" description="N6-methyllysine; alternate" evidence="1">
    <location>
        <position position="38"/>
    </location>
</feature>
<feature type="modified residue" description="Phosphotyrosine" evidence="2">
    <location>
        <position position="42"/>
    </location>
</feature>
<feature type="modified residue" description="N6,N6,N6-trimethyllysine; alternate" evidence="2">
    <location>
        <position position="57"/>
    </location>
</feature>
<feature type="modified residue" description="N6-(2-hydroxyisobutyryl)lysine; alternate" evidence="23">
    <location>
        <position position="57"/>
    </location>
</feature>
<feature type="modified residue" description="N6-(beta-hydroxybutyryl)lysine; alternate" evidence="25">
    <location>
        <position position="57"/>
    </location>
</feature>
<feature type="modified residue" description="N6-acetyllysine; alternate" evidence="2">
    <location>
        <position position="57"/>
    </location>
</feature>
<feature type="modified residue" description="N6-crotonyllysine; alternate" evidence="21">
    <location>
        <position position="57"/>
    </location>
</feature>
<feature type="modified residue" description="N6-glutaryllysine; alternate" evidence="2">
    <location>
        <position position="57"/>
    </location>
</feature>
<feature type="modified residue" description="N6-lactoyllysine; alternate" evidence="28">
    <location>
        <position position="57"/>
    </location>
</feature>
<feature type="modified residue" description="N6-methyllysine; by EHMT2; alternate" evidence="2">
    <location>
        <position position="57"/>
    </location>
</feature>
<feature type="modified residue" description="N6-succinyllysine; alternate" evidence="22">
    <location>
        <position position="57"/>
    </location>
</feature>
<feature type="modified residue" description="Phosphoserine" evidence="2">
    <location>
        <position position="58"/>
    </location>
</feature>
<feature type="modified residue" description="N6-(2-hydroxyisobutyryl)lysine; alternate" evidence="23">
    <location>
        <position position="65"/>
    </location>
</feature>
<feature type="modified residue" description="N6-methyllysine; alternate" evidence="2">
    <location>
        <position position="65"/>
    </location>
</feature>
<feature type="modified residue" description="N6,N6,N6-trimethyllysine; alternate" evidence="11 20">
    <location>
        <position position="80"/>
    </location>
</feature>
<feature type="modified residue" description="N6,N6-dimethyllysine; alternate" evidence="11 20">
    <location>
        <position position="80"/>
    </location>
</feature>
<feature type="modified residue" description="N6-(2-hydroxyisobutyryl)lysine; alternate" evidence="23">
    <location>
        <position position="80"/>
    </location>
</feature>
<feature type="modified residue" description="N6-acetyllysine; alternate" evidence="2">
    <location>
        <position position="80"/>
    </location>
</feature>
<feature type="modified residue" description="N6-butyryllysine; alternate" evidence="24">
    <location>
        <position position="80"/>
    </location>
</feature>
<feature type="modified residue" description="N6-glutaryllysine; alternate" evidence="2">
    <location>
        <position position="80"/>
    </location>
</feature>
<feature type="modified residue" description="N6-lactoyllysine; alternate" evidence="2">
    <location>
        <position position="80"/>
    </location>
</feature>
<feature type="modified residue" description="N6-methyllysine; alternate" evidence="11 20">
    <location>
        <position position="80"/>
    </location>
</feature>
<feature type="modified residue" description="N6-succinyllysine; alternate" evidence="22">
    <location>
        <position position="80"/>
    </location>
</feature>
<feature type="modified residue" description="Phosphothreonine" evidence="2">
    <location>
        <position position="81"/>
    </location>
</feature>
<feature type="modified residue" description="Phosphoserine" evidence="2">
    <location>
        <position position="87"/>
    </location>
</feature>
<feature type="modified residue" description="Phosphothreonine" evidence="4">
    <location>
        <position position="108"/>
    </location>
</feature>
<feature type="modified residue" description="N6-acetyllysine; alternate" evidence="2">
    <location>
        <position position="116"/>
    </location>
</feature>
<feature type="modified residue" description="N6-glutaryllysine; alternate" evidence="2">
    <location>
        <position position="116"/>
    </location>
</feature>
<feature type="modified residue" description="N6-(2-hydroxyisobutyryl)lysine; alternate" evidence="23">
    <location>
        <position position="123"/>
    </location>
</feature>
<feature type="modified residue" description="N6-acetyllysine; alternate" evidence="2">
    <location>
        <position position="123"/>
    </location>
</feature>
<feature type="modified residue" description="N6-butyryllysine; alternate" evidence="24">
    <location>
        <position position="123"/>
    </location>
</feature>
<feature type="modified residue" description="N6-glutaryllysine; alternate" evidence="2">
    <location>
        <position position="123"/>
    </location>
</feature>
<feature type="modified residue" description="N6-methyllysine; alternate" evidence="11">
    <location>
        <position position="123"/>
    </location>
</feature>
<feature type="modified residue" description="N6-succinyllysine; alternate" evidence="2">
    <location>
        <position position="123"/>
    </location>
</feature>
<feature type="lipid moiety-binding region" description="N6-decanoyllysine" evidence="2">
    <location>
        <position position="19"/>
    </location>
</feature>
<feature type="mutagenesis site" description="Abolished serotonylation by TGM2. Reduced neurite length." evidence="27">
    <original>Q</original>
    <variation>A</variation>
    <location>
        <position position="6"/>
    </location>
</feature>
<feature type="sequence conflict" description="In Ref. 5; AAH21768." evidence="30" ref="5">
    <original>I</original>
    <variation>T</variation>
    <location>
        <position position="75"/>
    </location>
</feature>
<feature type="sequence conflict" description="In Ref. 4; BAE31789/BAE30411." evidence="30" ref="4">
    <original>A</original>
    <variation>E</variation>
    <location>
        <position position="99"/>
    </location>
</feature>
<feature type="sequence conflict" description="In Ref. 3; X91866." evidence="30" ref="3">
    <original>R</original>
    <variation>C</variation>
    <location>
        <position position="129"/>
    </location>
</feature>
<feature type="helix" evidence="36">
    <location>
        <begin position="46"/>
        <end position="55"/>
    </location>
</feature>
<feature type="helix" evidence="36">
    <location>
        <begin position="65"/>
        <end position="76"/>
    </location>
</feature>
<feature type="turn" evidence="36">
    <location>
        <begin position="77"/>
        <end position="79"/>
    </location>
</feature>
<feature type="strand" evidence="35">
    <location>
        <begin position="80"/>
        <end position="82"/>
    </location>
</feature>
<feature type="helix" evidence="36">
    <location>
        <begin position="87"/>
        <end position="113"/>
    </location>
</feature>
<feature type="turn" evidence="36">
    <location>
        <begin position="114"/>
        <end position="116"/>
    </location>
</feature>
<feature type="strand" evidence="36">
    <location>
        <begin position="118"/>
        <end position="120"/>
    </location>
</feature>
<feature type="helix" evidence="36">
    <location>
        <begin position="122"/>
        <end position="132"/>
    </location>
</feature>
<proteinExistence type="evidence at protein level"/>
<protein>
    <recommendedName>
        <fullName>Histone H3.3</fullName>
    </recommendedName>
</protein>
<dbReference type="EMBL" id="X13605">
    <property type="protein sequence ID" value="CAA31940.1"/>
    <property type="molecule type" value="mRNA"/>
</dbReference>
<dbReference type="EMBL" id="Z85979">
    <property type="protein sequence ID" value="CAB06625.1"/>
    <property type="molecule type" value="mRNA"/>
</dbReference>
<dbReference type="EMBL" id="X91866">
    <property type="status" value="NOT_ANNOTATED_CDS"/>
    <property type="molecule type" value="mRNA"/>
</dbReference>
<dbReference type="EMBL" id="AK002928">
    <property type="protein sequence ID" value="BAB22464.1"/>
    <property type="molecule type" value="mRNA"/>
</dbReference>
<dbReference type="EMBL" id="AK011431">
    <property type="protein sequence ID" value="BAB27616.1"/>
    <property type="status" value="ALT_FRAME"/>
    <property type="molecule type" value="mRNA"/>
</dbReference>
<dbReference type="EMBL" id="AK037900">
    <property type="protein sequence ID" value="BAC29895.1"/>
    <property type="molecule type" value="mRNA"/>
</dbReference>
<dbReference type="EMBL" id="AK088075">
    <property type="protein sequence ID" value="BAC40130.1"/>
    <property type="molecule type" value="mRNA"/>
</dbReference>
<dbReference type="EMBL" id="AK135839">
    <property type="protein sequence ID" value="BAE22687.1"/>
    <property type="molecule type" value="mRNA"/>
</dbReference>
<dbReference type="EMBL" id="AK150467">
    <property type="protein sequence ID" value="BAE29584.1"/>
    <property type="molecule type" value="mRNA"/>
</dbReference>
<dbReference type="EMBL" id="AK150468">
    <property type="protein sequence ID" value="BAE29585.1"/>
    <property type="molecule type" value="mRNA"/>
</dbReference>
<dbReference type="EMBL" id="AK150591">
    <property type="protein sequence ID" value="BAE29685.1"/>
    <property type="molecule type" value="mRNA"/>
</dbReference>
<dbReference type="EMBL" id="AK150928">
    <property type="protein sequence ID" value="BAE29966.1"/>
    <property type="molecule type" value="mRNA"/>
</dbReference>
<dbReference type="EMBL" id="AK151274">
    <property type="protein sequence ID" value="BAE30261.1"/>
    <property type="molecule type" value="mRNA"/>
</dbReference>
<dbReference type="EMBL" id="AK151336">
    <property type="protein sequence ID" value="BAE30314.1"/>
    <property type="molecule type" value="mRNA"/>
</dbReference>
<dbReference type="EMBL" id="AK151451">
    <property type="protein sequence ID" value="BAE30411.1"/>
    <property type="molecule type" value="mRNA"/>
</dbReference>
<dbReference type="EMBL" id="AK151634">
    <property type="protein sequence ID" value="BAE30566.1"/>
    <property type="molecule type" value="mRNA"/>
</dbReference>
<dbReference type="EMBL" id="AK151658">
    <property type="protein sequence ID" value="BAE30586.1"/>
    <property type="molecule type" value="mRNA"/>
</dbReference>
<dbReference type="EMBL" id="AK151661">
    <property type="protein sequence ID" value="BAE30589.1"/>
    <property type="molecule type" value="mRNA"/>
</dbReference>
<dbReference type="EMBL" id="AK151869">
    <property type="protein sequence ID" value="BAE30757.1"/>
    <property type="molecule type" value="mRNA"/>
</dbReference>
<dbReference type="EMBL" id="AK152293">
    <property type="protein sequence ID" value="BAE31102.1"/>
    <property type="molecule type" value="mRNA"/>
</dbReference>
<dbReference type="EMBL" id="AK152453">
    <property type="protein sequence ID" value="BAE31231.1"/>
    <property type="molecule type" value="mRNA"/>
</dbReference>
<dbReference type="EMBL" id="AK152455">
    <property type="protein sequence ID" value="BAE31233.1"/>
    <property type="molecule type" value="mRNA"/>
</dbReference>
<dbReference type="EMBL" id="AK152623">
    <property type="protein sequence ID" value="BAE31366.1"/>
    <property type="molecule type" value="mRNA"/>
</dbReference>
<dbReference type="EMBL" id="AK152911">
    <property type="protein sequence ID" value="BAE31590.1"/>
    <property type="molecule type" value="mRNA"/>
</dbReference>
<dbReference type="EMBL" id="AK153034">
    <property type="protein sequence ID" value="BAE31666.1"/>
    <property type="molecule type" value="mRNA"/>
</dbReference>
<dbReference type="EMBL" id="AK153189">
    <property type="protein sequence ID" value="BAE31789.1"/>
    <property type="molecule type" value="mRNA"/>
</dbReference>
<dbReference type="EMBL" id="AK153239">
    <property type="protein sequence ID" value="BAE31831.1"/>
    <property type="molecule type" value="mRNA"/>
</dbReference>
<dbReference type="EMBL" id="AK153294">
    <property type="protein sequence ID" value="BAE31877.1"/>
    <property type="molecule type" value="mRNA"/>
</dbReference>
<dbReference type="EMBL" id="AK153371">
    <property type="protein sequence ID" value="BAE31939.1"/>
    <property type="molecule type" value="mRNA"/>
</dbReference>
<dbReference type="EMBL" id="AK153530">
    <property type="protein sequence ID" value="BAE32069.1"/>
    <property type="molecule type" value="mRNA"/>
</dbReference>
<dbReference type="EMBL" id="AK159615">
    <property type="protein sequence ID" value="BAE35232.1"/>
    <property type="molecule type" value="mRNA"/>
</dbReference>
<dbReference type="EMBL" id="AK159807">
    <property type="protein sequence ID" value="BAE35387.1"/>
    <property type="status" value="ALT_FRAME"/>
    <property type="molecule type" value="mRNA"/>
</dbReference>
<dbReference type="EMBL" id="AK159850">
    <property type="protein sequence ID" value="BAE35427.1"/>
    <property type="molecule type" value="mRNA"/>
</dbReference>
<dbReference type="EMBL" id="AK160677">
    <property type="protein sequence ID" value="BAE35953.1"/>
    <property type="molecule type" value="mRNA"/>
</dbReference>
<dbReference type="EMBL" id="AK161675">
    <property type="protein sequence ID" value="BAE36524.1"/>
    <property type="molecule type" value="mRNA"/>
</dbReference>
<dbReference type="EMBL" id="AK162040">
    <property type="protein sequence ID" value="BAE36694.1"/>
    <property type="molecule type" value="mRNA"/>
</dbReference>
<dbReference type="EMBL" id="AK163244">
    <property type="protein sequence ID" value="BAE37253.1"/>
    <property type="molecule type" value="mRNA"/>
</dbReference>
<dbReference type="EMBL" id="AK167828">
    <property type="protein sequence ID" value="BAE39850.1"/>
    <property type="molecule type" value="mRNA"/>
</dbReference>
<dbReference type="EMBL" id="AK167879">
    <property type="protein sequence ID" value="BAE39892.1"/>
    <property type="molecule type" value="mRNA"/>
</dbReference>
<dbReference type="EMBL" id="AK168197">
    <property type="protein sequence ID" value="BAE40157.1"/>
    <property type="molecule type" value="mRNA"/>
</dbReference>
<dbReference type="EMBL" id="AK168698">
    <property type="protein sequence ID" value="BAE40542.1"/>
    <property type="molecule type" value="mRNA"/>
</dbReference>
<dbReference type="EMBL" id="AK169042">
    <property type="protein sequence ID" value="BAE40831.1"/>
    <property type="molecule type" value="mRNA"/>
</dbReference>
<dbReference type="EMBL" id="AK169226">
    <property type="protein sequence ID" value="BAE40995.1"/>
    <property type="molecule type" value="mRNA"/>
</dbReference>
<dbReference type="EMBL" id="BC002268">
    <property type="protein sequence ID" value="AAH02268.1"/>
    <property type="molecule type" value="mRNA"/>
</dbReference>
<dbReference type="EMBL" id="BC012687">
    <property type="protein sequence ID" value="AAH12687.1"/>
    <property type="molecule type" value="mRNA"/>
</dbReference>
<dbReference type="EMBL" id="BC021768">
    <property type="protein sequence ID" value="AAH21768.1"/>
    <property type="molecule type" value="mRNA"/>
</dbReference>
<dbReference type="EMBL" id="BC037730">
    <property type="protein sequence ID" value="AAH37730.1"/>
    <property type="molecule type" value="mRNA"/>
</dbReference>
<dbReference type="EMBL" id="BC083353">
    <property type="protein sequence ID" value="AAH83353.1"/>
    <property type="molecule type" value="mRNA"/>
</dbReference>
<dbReference type="EMBL" id="BC088835">
    <property type="protein sequence ID" value="AAH88835.1"/>
    <property type="molecule type" value="mRNA"/>
</dbReference>
<dbReference type="EMBL" id="BC092043">
    <property type="protein sequence ID" value="AAH92043.1"/>
    <property type="molecule type" value="mRNA"/>
</dbReference>
<dbReference type="EMBL" id="BC092300">
    <property type="protein sequence ID" value="AAH92300.1"/>
    <property type="status" value="ALT_FRAME"/>
    <property type="molecule type" value="mRNA"/>
</dbReference>
<dbReference type="EMBL" id="BC106177">
    <property type="protein sequence ID" value="AAI06178.1"/>
    <property type="molecule type" value="mRNA"/>
</dbReference>
<dbReference type="EMBL" id="AY383567">
    <property type="protein sequence ID" value="AAQ96274.1"/>
    <property type="molecule type" value="Genomic_DNA"/>
</dbReference>
<dbReference type="CCDS" id="CCDS15573.1"/>
<dbReference type="CCDS" id="CCDS36377.1"/>
<dbReference type="PIR" id="S04186">
    <property type="entry name" value="S04186"/>
</dbReference>
<dbReference type="RefSeq" id="NP_032236.1">
    <property type="nucleotide sequence ID" value="NM_008210.5"/>
</dbReference>
<dbReference type="RefSeq" id="NP_032237.1">
    <property type="nucleotide sequence ID" value="NM_008211.3"/>
</dbReference>
<dbReference type="RefSeq" id="XP_006532311.1">
    <property type="nucleotide sequence ID" value="XM_006532248.2"/>
</dbReference>
<dbReference type="PDB" id="2RVN">
    <property type="method" value="NMR"/>
    <property type="chains" value="B=2-18"/>
</dbReference>
<dbReference type="PDB" id="5XM0">
    <property type="method" value="X-ray"/>
    <property type="resolution" value="2.87 A"/>
    <property type="chains" value="A/E=1-136"/>
</dbReference>
<dbReference type="PDB" id="5XM1">
    <property type="method" value="X-ray"/>
    <property type="resolution" value="3.45 A"/>
    <property type="chains" value="A/E=1-136"/>
</dbReference>
<dbReference type="PDB" id="8PKI">
    <property type="method" value="EM"/>
    <property type="resolution" value="2.58 A"/>
    <property type="chains" value="A/E=1-136"/>
</dbReference>
<dbReference type="PDB" id="8PKJ">
    <property type="method" value="EM"/>
    <property type="resolution" value="2.50 A"/>
    <property type="chains" value="A/E=1-136"/>
</dbReference>
<dbReference type="PDBsum" id="2RVN"/>
<dbReference type="PDBsum" id="5XM0"/>
<dbReference type="PDBsum" id="5XM1"/>
<dbReference type="PDBsum" id="8PKI"/>
<dbReference type="PDBsum" id="8PKJ"/>
<dbReference type="EMDB" id="EMD-17740"/>
<dbReference type="SMR" id="P84244"/>
<dbReference type="BioGRID" id="200196">
    <property type="interactions" value="28"/>
</dbReference>
<dbReference type="BioGRID" id="200199">
    <property type="interactions" value="4"/>
</dbReference>
<dbReference type="DIP" id="DIP-35190N"/>
<dbReference type="FunCoup" id="P84244">
    <property type="interactions" value="3478"/>
</dbReference>
<dbReference type="IntAct" id="P84244">
    <property type="interactions" value="37"/>
</dbReference>
<dbReference type="MINT" id="P84244"/>
<dbReference type="STRING" id="10090.ENSMUSP00000102062"/>
<dbReference type="GlyGen" id="P84244">
    <property type="glycosylation" value="1 site, 1 O-linked glycan (1 site)"/>
</dbReference>
<dbReference type="iPTMnet" id="P84244"/>
<dbReference type="PhosphoSitePlus" id="P84244"/>
<dbReference type="SwissPalm" id="P84244"/>
<dbReference type="jPOST" id="P84244"/>
<dbReference type="PaxDb" id="10090-ENSMUSP00000102062"/>
<dbReference type="PeptideAtlas" id="P84244"/>
<dbReference type="ProteomicsDB" id="269795"/>
<dbReference type="Pumba" id="P84244"/>
<dbReference type="Antibodypedia" id="54014">
    <property type="antibodies" value="582 antibodies from 18 providers"/>
</dbReference>
<dbReference type="Antibodypedia" id="79211">
    <property type="antibodies" value="181 antibodies from 2 providers"/>
</dbReference>
<dbReference type="DNASU" id="15078"/>
<dbReference type="DNASU" id="15081"/>
<dbReference type="Ensembl" id="ENSMUST00000016703.8">
    <property type="protein sequence ID" value="ENSMUSP00000016703.8"/>
    <property type="gene ID" value="ENSMUSG00000016559.15"/>
</dbReference>
<dbReference type="Ensembl" id="ENSMUST00000106454.8">
    <property type="protein sequence ID" value="ENSMUSP00000102062.2"/>
    <property type="gene ID" value="ENSMUSG00000016559.15"/>
</dbReference>
<dbReference type="Ensembl" id="ENSMUST00000161308.8">
    <property type="protein sequence ID" value="ENSMUSP00000124509.2"/>
    <property type="gene ID" value="ENSMUSG00000060743.13"/>
</dbReference>
<dbReference type="Ensembl" id="ENSMUST00000162814.8">
    <property type="protein sequence ID" value="ENSMUSP00000125104.2"/>
    <property type="gene ID" value="ENSMUSG00000060743.13"/>
</dbReference>
<dbReference type="GeneID" id="15078"/>
<dbReference type="GeneID" id="15081"/>
<dbReference type="KEGG" id="mmu:15078"/>
<dbReference type="KEGG" id="mmu:15081"/>
<dbReference type="UCSC" id="uc007dwr.1">
    <property type="organism name" value="mouse"/>
</dbReference>
<dbReference type="CTD" id="15078"/>
<dbReference type="CTD" id="15081"/>
<dbReference type="MGI" id="MGI:1097686">
    <property type="gene designation" value="H3f3a"/>
</dbReference>
<dbReference type="MGI" id="MGI:1101768">
    <property type="gene designation" value="H3f3b"/>
</dbReference>
<dbReference type="VEuPathDB" id="HostDB:ENSMUSG00000016559"/>
<dbReference type="VEuPathDB" id="HostDB:ENSMUSG00000060743"/>
<dbReference type="eggNOG" id="KOG1745">
    <property type="taxonomic scope" value="Eukaryota"/>
</dbReference>
<dbReference type="GeneTree" id="ENSGT01110000267215"/>
<dbReference type="HOGENOM" id="CLU_078295_4_0_1"/>
<dbReference type="InParanoid" id="P84244"/>
<dbReference type="OMA" id="HIFAEMA"/>
<dbReference type="OrthoDB" id="9609993at2759"/>
<dbReference type="PhylomeDB" id="P84244"/>
<dbReference type="TreeFam" id="TF314241"/>
<dbReference type="Reactome" id="R-MMU-212300">
    <property type="pathway name" value="PRC2 methylates histones and DNA"/>
</dbReference>
<dbReference type="Reactome" id="R-MMU-2299718">
    <property type="pathway name" value="Condensation of Prophase Chromosomes"/>
</dbReference>
<dbReference type="Reactome" id="R-MMU-8936459">
    <property type="pathway name" value="RUNX1 regulates genes involved in megakaryocyte differentiation and platelet function"/>
</dbReference>
<dbReference type="Reactome" id="R-MMU-9018519">
    <property type="pathway name" value="Estrogen-dependent gene expression"/>
</dbReference>
<dbReference type="Reactome" id="R-MMU-9670095">
    <property type="pathway name" value="Inhibition of DNA recombination at telomere"/>
</dbReference>
<dbReference type="Reactome" id="R-MMU-983231">
    <property type="pathway name" value="Factors involved in megakaryocyte development and platelet production"/>
</dbReference>
<dbReference type="Reactome" id="R-MMU-9841922">
    <property type="pathway name" value="MLL4 and MLL3 complexes regulate expression of PPARG target genes in adipogenesis and hepatic steatosis"/>
</dbReference>
<dbReference type="Reactome" id="R-MMU-9843940">
    <property type="pathway name" value="Regulation of endogenous retroelements by KRAB-ZFP proteins"/>
</dbReference>
<dbReference type="BioGRID-ORCS" id="15078">
    <property type="hits" value="5 hits in 49 CRISPR screens"/>
</dbReference>
<dbReference type="BioGRID-ORCS" id="15081">
    <property type="hits" value="7 hits in 79 CRISPR screens"/>
</dbReference>
<dbReference type="ChiTaRS" id="H3f3a">
    <property type="organism name" value="mouse"/>
</dbReference>
<dbReference type="ChiTaRS" id="H3f3b">
    <property type="organism name" value="mouse"/>
</dbReference>
<dbReference type="EvolutionaryTrace" id="P84244"/>
<dbReference type="PRO" id="PR:P84244"/>
<dbReference type="Proteomes" id="UP000000589">
    <property type="component" value="Chromosome 1"/>
</dbReference>
<dbReference type="Proteomes" id="UP000000589">
    <property type="component" value="Chromosome 11"/>
</dbReference>
<dbReference type="RNAct" id="P84244">
    <property type="molecule type" value="protein"/>
</dbReference>
<dbReference type="Bgee" id="ENSMUSG00000016559">
    <property type="expression patterns" value="Expressed in vestibular epithelium and 268 other cell types or tissues"/>
</dbReference>
<dbReference type="ExpressionAtlas" id="P84244">
    <property type="expression patterns" value="baseline and differential"/>
</dbReference>
<dbReference type="GO" id="GO:0001740">
    <property type="term" value="C:Barr body"/>
    <property type="evidence" value="ECO:0000314"/>
    <property type="project" value="MGI"/>
</dbReference>
<dbReference type="GO" id="GO:0000785">
    <property type="term" value="C:chromatin"/>
    <property type="evidence" value="ECO:0000314"/>
    <property type="project" value="MGI"/>
</dbReference>
<dbReference type="GO" id="GO:0005694">
    <property type="term" value="C:chromosome"/>
    <property type="evidence" value="ECO:0000314"/>
    <property type="project" value="MGI"/>
</dbReference>
<dbReference type="GO" id="GO:0000775">
    <property type="term" value="C:chromosome, centromeric region"/>
    <property type="evidence" value="ECO:0000314"/>
    <property type="project" value="MGI"/>
</dbReference>
<dbReference type="GO" id="GO:0000781">
    <property type="term" value="C:chromosome, telomeric region"/>
    <property type="evidence" value="ECO:0007669"/>
    <property type="project" value="Ensembl"/>
</dbReference>
<dbReference type="GO" id="GO:0000939">
    <property type="term" value="C:inner kinetochore"/>
    <property type="evidence" value="ECO:0000314"/>
    <property type="project" value="MGI"/>
</dbReference>
<dbReference type="GO" id="GO:0005654">
    <property type="term" value="C:nucleoplasm"/>
    <property type="evidence" value="ECO:0000304"/>
    <property type="project" value="Reactome"/>
</dbReference>
<dbReference type="GO" id="GO:0000786">
    <property type="term" value="C:nucleosome"/>
    <property type="evidence" value="ECO:0007669"/>
    <property type="project" value="UniProtKB-KW"/>
</dbReference>
<dbReference type="GO" id="GO:0005634">
    <property type="term" value="C:nucleus"/>
    <property type="evidence" value="ECO:0000314"/>
    <property type="project" value="MGI"/>
</dbReference>
<dbReference type="GO" id="GO:0031492">
    <property type="term" value="F:nucleosomal DNA binding"/>
    <property type="evidence" value="ECO:0007669"/>
    <property type="project" value="Ensembl"/>
</dbReference>
<dbReference type="GO" id="GO:0046982">
    <property type="term" value="F:protein heterodimerization activity"/>
    <property type="evidence" value="ECO:0007669"/>
    <property type="project" value="InterPro"/>
</dbReference>
<dbReference type="GO" id="GO:0000978">
    <property type="term" value="F:RNA polymerase II cis-regulatory region sequence-specific DNA binding"/>
    <property type="evidence" value="ECO:0007669"/>
    <property type="project" value="Ensembl"/>
</dbReference>
<dbReference type="GO" id="GO:0000979">
    <property type="term" value="F:RNA polymerase II core promoter sequence-specific DNA binding"/>
    <property type="evidence" value="ECO:0007669"/>
    <property type="project" value="Ensembl"/>
</dbReference>
<dbReference type="GO" id="GO:0030527">
    <property type="term" value="F:structural constituent of chromatin"/>
    <property type="evidence" value="ECO:0007669"/>
    <property type="project" value="Ensembl"/>
</dbReference>
<dbReference type="GO" id="GO:0008283">
    <property type="term" value="P:cell population proliferation"/>
    <property type="evidence" value="ECO:0000316"/>
    <property type="project" value="MGI"/>
</dbReference>
<dbReference type="GO" id="GO:0007566">
    <property type="term" value="P:embryo implantation"/>
    <property type="evidence" value="ECO:0000315"/>
    <property type="project" value="MGI"/>
</dbReference>
<dbReference type="GO" id="GO:0008584">
    <property type="term" value="P:male gonad development"/>
    <property type="evidence" value="ECO:0000315"/>
    <property type="project" value="MGI"/>
</dbReference>
<dbReference type="GO" id="GO:0035264">
    <property type="term" value="P:multicellular organism growth"/>
    <property type="evidence" value="ECO:0000315"/>
    <property type="project" value="MGI"/>
</dbReference>
<dbReference type="GO" id="GO:0042692">
    <property type="term" value="P:muscle cell differentiation"/>
    <property type="evidence" value="ECO:0000316"/>
    <property type="project" value="MGI"/>
</dbReference>
<dbReference type="GO" id="GO:1902340">
    <property type="term" value="P:negative regulation of chromosome condensation"/>
    <property type="evidence" value="ECO:0000316"/>
    <property type="project" value="MGI"/>
</dbReference>
<dbReference type="GO" id="GO:0006334">
    <property type="term" value="P:nucleosome assembly"/>
    <property type="evidence" value="ECO:0007669"/>
    <property type="project" value="Ensembl"/>
</dbReference>
<dbReference type="GO" id="GO:0006997">
    <property type="term" value="P:nucleus organization"/>
    <property type="evidence" value="ECO:0000315"/>
    <property type="project" value="MGI"/>
</dbReference>
<dbReference type="GO" id="GO:0001556">
    <property type="term" value="P:oocyte maturation"/>
    <property type="evidence" value="ECO:0000314"/>
    <property type="project" value="MGI"/>
</dbReference>
<dbReference type="GO" id="GO:0048477">
    <property type="term" value="P:oogenesis"/>
    <property type="evidence" value="ECO:0000316"/>
    <property type="project" value="MGI"/>
</dbReference>
<dbReference type="GO" id="GO:0001649">
    <property type="term" value="P:osteoblast differentiation"/>
    <property type="evidence" value="ECO:0000316"/>
    <property type="project" value="MGI"/>
</dbReference>
<dbReference type="GO" id="GO:0031508">
    <property type="term" value="P:pericentric heterochromatin formation"/>
    <property type="evidence" value="ECO:0000316"/>
    <property type="project" value="MGI"/>
</dbReference>
<dbReference type="GO" id="GO:0030307">
    <property type="term" value="P:positive regulation of cell growth"/>
    <property type="evidence" value="ECO:0007669"/>
    <property type="project" value="Ensembl"/>
</dbReference>
<dbReference type="GO" id="GO:0090230">
    <property type="term" value="P:regulation of centromere complex assembly"/>
    <property type="evidence" value="ECO:0000315"/>
    <property type="project" value="MGI"/>
</dbReference>
<dbReference type="GO" id="GO:0007338">
    <property type="term" value="P:single fertilization"/>
    <property type="evidence" value="ECO:0000315"/>
    <property type="project" value="MGI"/>
</dbReference>
<dbReference type="GO" id="GO:0007286">
    <property type="term" value="P:spermatid development"/>
    <property type="evidence" value="ECO:0000315"/>
    <property type="project" value="MGI"/>
</dbReference>
<dbReference type="GO" id="GO:0007283">
    <property type="term" value="P:spermatogenesis"/>
    <property type="evidence" value="ECO:0000315"/>
    <property type="project" value="MGI"/>
</dbReference>
<dbReference type="GO" id="GO:0031509">
    <property type="term" value="P:subtelomeric heterochromatin formation"/>
    <property type="evidence" value="ECO:0000316"/>
    <property type="project" value="MGI"/>
</dbReference>
<dbReference type="CDD" id="cd22911">
    <property type="entry name" value="HFD_H3"/>
    <property type="match status" value="1"/>
</dbReference>
<dbReference type="FunFam" id="1.10.20.10:FF:000078">
    <property type="entry name" value="Histone H3"/>
    <property type="match status" value="1"/>
</dbReference>
<dbReference type="FunFam" id="1.10.20.10:FF:000044">
    <property type="entry name" value="Histone H3.3"/>
    <property type="match status" value="1"/>
</dbReference>
<dbReference type="Gene3D" id="1.10.20.10">
    <property type="entry name" value="Histone, subunit A"/>
    <property type="match status" value="1"/>
</dbReference>
<dbReference type="InterPro" id="IPR009072">
    <property type="entry name" value="Histone-fold"/>
</dbReference>
<dbReference type="InterPro" id="IPR007125">
    <property type="entry name" value="Histone_H2A/H2B/H3"/>
</dbReference>
<dbReference type="InterPro" id="IPR000164">
    <property type="entry name" value="Histone_H3/CENP-A"/>
</dbReference>
<dbReference type="PANTHER" id="PTHR11426">
    <property type="entry name" value="HISTONE H3"/>
    <property type="match status" value="1"/>
</dbReference>
<dbReference type="Pfam" id="PF00125">
    <property type="entry name" value="Histone"/>
    <property type="match status" value="1"/>
</dbReference>
<dbReference type="PRINTS" id="PR00622">
    <property type="entry name" value="HISTONEH3"/>
</dbReference>
<dbReference type="SMART" id="SM00428">
    <property type="entry name" value="H3"/>
    <property type="match status" value="1"/>
</dbReference>
<dbReference type="SUPFAM" id="SSF47113">
    <property type="entry name" value="Histone-fold"/>
    <property type="match status" value="1"/>
</dbReference>
<dbReference type="PROSITE" id="PS00322">
    <property type="entry name" value="HISTONE_H3_1"/>
    <property type="match status" value="1"/>
</dbReference>
<dbReference type="PROSITE" id="PS00959">
    <property type="entry name" value="HISTONE_H3_2"/>
    <property type="match status" value="1"/>
</dbReference>
<name>H33_MOUSE</name>
<organism>
    <name type="scientific">Mus musculus</name>
    <name type="common">Mouse</name>
    <dbReference type="NCBI Taxonomy" id="10090"/>
    <lineage>
        <taxon>Eukaryota</taxon>
        <taxon>Metazoa</taxon>
        <taxon>Chordata</taxon>
        <taxon>Craniata</taxon>
        <taxon>Vertebrata</taxon>
        <taxon>Euteleostomi</taxon>
        <taxon>Mammalia</taxon>
        <taxon>Eutheria</taxon>
        <taxon>Euarchontoglires</taxon>
        <taxon>Glires</taxon>
        <taxon>Rodentia</taxon>
        <taxon>Myomorpha</taxon>
        <taxon>Muroidea</taxon>
        <taxon>Muridae</taxon>
        <taxon>Murinae</taxon>
        <taxon>Mus</taxon>
        <taxon>Mus</taxon>
    </lineage>
</organism>